<accession>Q8IVJ1</accession>
<accession>Q63HJ4</accession>
<accession>Q658Z5</accession>
<accession>Q659A4</accession>
<accession>Q6MZK2</accession>
<proteinExistence type="evidence at protein level"/>
<evidence type="ECO:0000250" key="1">
    <source>
        <dbReference type="UniProtKB" id="Q8BJA2"/>
    </source>
</evidence>
<evidence type="ECO:0000255" key="2"/>
<evidence type="ECO:0000256" key="3">
    <source>
        <dbReference type="SAM" id="MobiDB-lite"/>
    </source>
</evidence>
<evidence type="ECO:0000269" key="4">
    <source>
    </source>
</evidence>
<evidence type="ECO:0000269" key="5">
    <source>
    </source>
</evidence>
<evidence type="ECO:0000269" key="6">
    <source>
    </source>
</evidence>
<evidence type="ECO:0000269" key="7">
    <source>
    </source>
</evidence>
<evidence type="ECO:0000269" key="8">
    <source>
    </source>
</evidence>
<evidence type="ECO:0000269" key="9">
    <source>
    </source>
</evidence>
<evidence type="ECO:0000303" key="10">
    <source>
    </source>
</evidence>
<evidence type="ECO:0000305" key="11"/>
<evidence type="ECO:0000305" key="12">
    <source>
    </source>
</evidence>
<evidence type="ECO:0000312" key="13">
    <source>
        <dbReference type="HGNC" id="HGNC:19429"/>
    </source>
</evidence>
<organism>
    <name type="scientific">Homo sapiens</name>
    <name type="common">Human</name>
    <dbReference type="NCBI Taxonomy" id="9606"/>
    <lineage>
        <taxon>Eukaryota</taxon>
        <taxon>Metazoa</taxon>
        <taxon>Chordata</taxon>
        <taxon>Craniata</taxon>
        <taxon>Vertebrata</taxon>
        <taxon>Euteleostomi</taxon>
        <taxon>Mammalia</taxon>
        <taxon>Eutheria</taxon>
        <taxon>Euarchontoglires</taxon>
        <taxon>Primates</taxon>
        <taxon>Haplorrhini</taxon>
        <taxon>Catarrhini</taxon>
        <taxon>Hominidae</taxon>
        <taxon>Homo</taxon>
    </lineage>
</organism>
<name>S41A1_HUMAN</name>
<protein>
    <recommendedName>
        <fullName>Solute carrier family 41 member 1</fullName>
    </recommendedName>
</protein>
<feature type="chain" id="PRO_0000295111" description="Solute carrier family 41 member 1">
    <location>
        <begin position="1"/>
        <end position="513"/>
    </location>
</feature>
<feature type="transmembrane region" description="Helical" evidence="2">
    <location>
        <begin position="102"/>
        <end position="122"/>
    </location>
</feature>
<feature type="transmembrane region" description="Helical" evidence="2">
    <location>
        <begin position="185"/>
        <end position="205"/>
    </location>
</feature>
<feature type="transmembrane region" description="Helical" evidence="2">
    <location>
        <begin position="222"/>
        <end position="242"/>
    </location>
</feature>
<feature type="transmembrane region" description="Helical" evidence="2">
    <location>
        <begin position="257"/>
        <end position="277"/>
    </location>
</feature>
<feature type="transmembrane region" description="Helical" evidence="2">
    <location>
        <begin position="286"/>
        <end position="306"/>
    </location>
</feature>
<feature type="transmembrane region" description="Helical" evidence="2">
    <location>
        <begin position="316"/>
        <end position="336"/>
    </location>
</feature>
<feature type="transmembrane region" description="Helical" evidence="2">
    <location>
        <begin position="346"/>
        <end position="366"/>
    </location>
</feature>
<feature type="transmembrane region" description="Helical" evidence="2">
    <location>
        <begin position="411"/>
        <end position="431"/>
    </location>
</feature>
<feature type="transmembrane region" description="Helical" evidence="2">
    <location>
        <begin position="439"/>
        <end position="459"/>
    </location>
</feature>
<feature type="transmembrane region" description="Helical" evidence="2">
    <location>
        <begin position="484"/>
        <end position="504"/>
    </location>
</feature>
<feature type="region of interest" description="Disordered" evidence="3">
    <location>
        <begin position="1"/>
        <end position="42"/>
    </location>
</feature>
<feature type="region of interest" description="Disordered" evidence="3">
    <location>
        <begin position="60"/>
        <end position="91"/>
    </location>
</feature>
<feature type="compositionally biased region" description="Basic and acidic residues" evidence="3">
    <location>
        <begin position="1"/>
        <end position="11"/>
    </location>
</feature>
<feature type="compositionally biased region" description="Polar residues" evidence="3">
    <location>
        <begin position="13"/>
        <end position="24"/>
    </location>
</feature>
<feature type="sequence variant" id="VAR_086146" description="In NPHPL2; results in exon 6 skipping; results in loss of magnesium ion transmembrane transporter activity; does not affect localization to basolateral cell membrane; dbSNP:rs2102504055." evidence="7">
    <original>G</original>
    <variation>V</variation>
    <location>
        <position position="233"/>
    </location>
</feature>
<feature type="sequence variant" id="VAR_086248" description="Increased magnesium ion transmembrane transporter activity; no effect on plasma membrane localization; dbSNP:rs1305279636." evidence="8">
    <original>A</original>
    <variation>V</variation>
    <location>
        <position position="350"/>
    </location>
</feature>
<feature type="sequence conflict" description="In Ref. 2; CAH56135." evidence="11" ref="2">
    <original>S</original>
    <variation>P</variation>
    <location>
        <position position="3"/>
    </location>
</feature>
<feature type="sequence conflict" description="In Ref. 2; CAH56213." evidence="11" ref="2">
    <original>I</original>
    <variation>T</variation>
    <location>
        <position position="196"/>
    </location>
</feature>
<feature type="sequence conflict" description="In Ref. 2; CAH56213." evidence="11" ref="2">
    <original>I</original>
    <variation>V</variation>
    <location>
        <position position="204"/>
    </location>
</feature>
<feature type="sequence conflict" description="In Ref. 2; CAH56135." evidence="11" ref="2">
    <original>G</original>
    <variation>D</variation>
    <location>
        <position position="207"/>
    </location>
</feature>
<feature type="sequence conflict" description="In Ref. 2; CAH56135." evidence="11" ref="2">
    <original>L</original>
    <variation>P</variation>
    <location>
        <position position="217"/>
    </location>
</feature>
<feature type="sequence conflict" description="In Ref. 1; CAD58404." evidence="11" ref="1">
    <original>GISW</original>
    <variation>ASAG</variation>
    <location>
        <begin position="272"/>
        <end position="275"/>
    </location>
</feature>
<feature type="sequence conflict" description="In Ref. 2; CAE46028." evidence="11" ref="2">
    <original>A</original>
    <variation>T</variation>
    <location>
        <position position="365"/>
    </location>
</feature>
<feature type="sequence conflict" description="In Ref. 1; CAD58404." evidence="11" ref="1">
    <original>V</original>
    <variation>A</variation>
    <location>
        <position position="416"/>
    </location>
</feature>
<feature type="sequence conflict" description="In Ref. 2; CAH56135." evidence="11" ref="2">
    <original>V</original>
    <variation>A</variation>
    <location>
        <position position="464"/>
    </location>
</feature>
<feature type="sequence conflict" description="In Ref. 2; CAH56135." evidence="11" ref="2">
    <original>V</original>
    <variation>A</variation>
    <location>
        <position position="511"/>
    </location>
</feature>
<dbReference type="EMBL" id="AJ514402">
    <property type="protein sequence ID" value="CAD58404.1"/>
    <property type="molecule type" value="mRNA"/>
</dbReference>
<dbReference type="EMBL" id="AL831974">
    <property type="protein sequence ID" value="CAH56217.1"/>
    <property type="molecule type" value="mRNA"/>
</dbReference>
<dbReference type="EMBL" id="AL832001">
    <property type="protein sequence ID" value="CAH56211.1"/>
    <property type="molecule type" value="mRNA"/>
</dbReference>
<dbReference type="EMBL" id="AL832362">
    <property type="protein sequence ID" value="CAH56213.1"/>
    <property type="molecule type" value="mRNA"/>
</dbReference>
<dbReference type="EMBL" id="BX641054">
    <property type="protein sequence ID" value="CAE46028.1"/>
    <property type="molecule type" value="mRNA"/>
</dbReference>
<dbReference type="EMBL" id="BX648979">
    <property type="protein sequence ID" value="CAH56135.1"/>
    <property type="molecule type" value="mRNA"/>
</dbReference>
<dbReference type="CCDS" id="CCDS30988.1"/>
<dbReference type="RefSeq" id="NP_776253.3">
    <property type="nucleotide sequence ID" value="NM_173854.5"/>
</dbReference>
<dbReference type="RefSeq" id="XP_005245126.1">
    <property type="nucleotide sequence ID" value="XM_005245069.2"/>
</dbReference>
<dbReference type="RefSeq" id="XP_047272843.1">
    <property type="nucleotide sequence ID" value="XM_047416887.1"/>
</dbReference>
<dbReference type="RefSeq" id="XP_054191740.1">
    <property type="nucleotide sequence ID" value="XM_054335765.1"/>
</dbReference>
<dbReference type="BioGRID" id="129036">
    <property type="interactions" value="39"/>
</dbReference>
<dbReference type="FunCoup" id="Q8IVJ1">
    <property type="interactions" value="223"/>
</dbReference>
<dbReference type="IntAct" id="Q8IVJ1">
    <property type="interactions" value="34"/>
</dbReference>
<dbReference type="STRING" id="9606.ENSP00000356105"/>
<dbReference type="DrugBank" id="DB14513">
    <property type="generic name" value="Magnesium"/>
</dbReference>
<dbReference type="TCDB" id="1.A.26.2.1">
    <property type="family name" value="the mg(2+) transporter-e (mgte) family"/>
</dbReference>
<dbReference type="iPTMnet" id="Q8IVJ1"/>
<dbReference type="PhosphoSitePlus" id="Q8IVJ1"/>
<dbReference type="SwissPalm" id="Q8IVJ1"/>
<dbReference type="BioMuta" id="SLC41A1"/>
<dbReference type="DMDM" id="152112285"/>
<dbReference type="jPOST" id="Q8IVJ1"/>
<dbReference type="MassIVE" id="Q8IVJ1"/>
<dbReference type="PaxDb" id="9606-ENSP00000356105"/>
<dbReference type="PeptideAtlas" id="Q8IVJ1"/>
<dbReference type="ProteomicsDB" id="70715"/>
<dbReference type="Antibodypedia" id="2794">
    <property type="antibodies" value="38 antibodies from 14 providers"/>
</dbReference>
<dbReference type="DNASU" id="254428"/>
<dbReference type="Ensembl" id="ENST00000367137.4">
    <property type="protein sequence ID" value="ENSP00000356105.3"/>
    <property type="gene ID" value="ENSG00000133065.11"/>
</dbReference>
<dbReference type="GeneID" id="254428"/>
<dbReference type="KEGG" id="hsa:254428"/>
<dbReference type="MANE-Select" id="ENST00000367137.4">
    <property type="protein sequence ID" value="ENSP00000356105.3"/>
    <property type="RefSeq nucleotide sequence ID" value="NM_173854.6"/>
    <property type="RefSeq protein sequence ID" value="NP_776253.3"/>
</dbReference>
<dbReference type="UCSC" id="uc001hdh.2">
    <property type="organism name" value="human"/>
</dbReference>
<dbReference type="AGR" id="HGNC:19429"/>
<dbReference type="CTD" id="254428"/>
<dbReference type="DisGeNET" id="254428"/>
<dbReference type="GeneCards" id="SLC41A1"/>
<dbReference type="HGNC" id="HGNC:19429">
    <property type="gene designation" value="SLC41A1"/>
</dbReference>
<dbReference type="HPA" id="ENSG00000133065">
    <property type="expression patterns" value="Tissue enhanced (heart muscle, pancreas, tongue)"/>
</dbReference>
<dbReference type="MalaCards" id="SLC41A1"/>
<dbReference type="MIM" id="610801">
    <property type="type" value="gene"/>
</dbReference>
<dbReference type="MIM" id="619468">
    <property type="type" value="phenotype"/>
</dbReference>
<dbReference type="neXtProt" id="NX_Q8IVJ1"/>
<dbReference type="OpenTargets" id="ENSG00000133065"/>
<dbReference type="PharmGKB" id="PA134889327"/>
<dbReference type="VEuPathDB" id="HostDB:ENSG00000133065"/>
<dbReference type="eggNOG" id="KOG3788">
    <property type="taxonomic scope" value="Eukaryota"/>
</dbReference>
<dbReference type="GeneTree" id="ENSGT00950000183042"/>
<dbReference type="HOGENOM" id="CLU_018207_3_1_1"/>
<dbReference type="InParanoid" id="Q8IVJ1"/>
<dbReference type="OMA" id="WDPDNVT"/>
<dbReference type="OrthoDB" id="5791097at2759"/>
<dbReference type="PAN-GO" id="Q8IVJ1">
    <property type="GO annotations" value="1 GO annotation based on evolutionary models"/>
</dbReference>
<dbReference type="PhylomeDB" id="Q8IVJ1"/>
<dbReference type="TreeFam" id="TF313647"/>
<dbReference type="PathwayCommons" id="Q8IVJ1"/>
<dbReference type="Reactome" id="R-HSA-425410">
    <property type="pathway name" value="Metal ion SLC transporters"/>
</dbReference>
<dbReference type="SignaLink" id="Q8IVJ1"/>
<dbReference type="BioGRID-ORCS" id="254428">
    <property type="hits" value="20 hits in 1160 CRISPR screens"/>
</dbReference>
<dbReference type="ChiTaRS" id="SLC41A1">
    <property type="organism name" value="human"/>
</dbReference>
<dbReference type="GenomeRNAi" id="254428"/>
<dbReference type="Pharos" id="Q8IVJ1">
    <property type="development level" value="Tbio"/>
</dbReference>
<dbReference type="PRO" id="PR:Q8IVJ1"/>
<dbReference type="Proteomes" id="UP000005640">
    <property type="component" value="Chromosome 1"/>
</dbReference>
<dbReference type="RNAct" id="Q8IVJ1">
    <property type="molecule type" value="protein"/>
</dbReference>
<dbReference type="Bgee" id="ENSG00000133065">
    <property type="expression patterns" value="Expressed in left ventricle myocardium and 170 other cell types or tissues"/>
</dbReference>
<dbReference type="ExpressionAtlas" id="Q8IVJ1">
    <property type="expression patterns" value="baseline and differential"/>
</dbReference>
<dbReference type="GO" id="GO:0016323">
    <property type="term" value="C:basolateral plasma membrane"/>
    <property type="evidence" value="ECO:0000314"/>
    <property type="project" value="ParkinsonsUK-UCL"/>
</dbReference>
<dbReference type="GO" id="GO:0005886">
    <property type="term" value="C:plasma membrane"/>
    <property type="evidence" value="ECO:0000314"/>
    <property type="project" value="ParkinsonsUK-UCL"/>
</dbReference>
<dbReference type="GO" id="GO:0032991">
    <property type="term" value="C:protein-containing complex"/>
    <property type="evidence" value="ECO:0000314"/>
    <property type="project" value="ParkinsonsUK-UCL"/>
</dbReference>
<dbReference type="GO" id="GO:0022890">
    <property type="term" value="F:inorganic cation transmembrane transporter activity"/>
    <property type="evidence" value="ECO:0000250"/>
    <property type="project" value="ParkinsonsUK-UCL"/>
</dbReference>
<dbReference type="GO" id="GO:0015095">
    <property type="term" value="F:magnesium ion transmembrane transporter activity"/>
    <property type="evidence" value="ECO:0000314"/>
    <property type="project" value="ParkinsonsUK-UCL"/>
</dbReference>
<dbReference type="GO" id="GO:0061768">
    <property type="term" value="F:magnesium:sodium antiporter activity"/>
    <property type="evidence" value="ECO:0000315"/>
    <property type="project" value="UniProtKB"/>
</dbReference>
<dbReference type="GO" id="GO:0022857">
    <property type="term" value="F:transmembrane transporter activity"/>
    <property type="evidence" value="ECO:0000314"/>
    <property type="project" value="ParkinsonsUK-UCL"/>
</dbReference>
<dbReference type="GO" id="GO:0071286">
    <property type="term" value="P:cellular response to magnesium ion"/>
    <property type="evidence" value="ECO:0000316"/>
    <property type="project" value="ParkinsonsUK-UCL"/>
</dbReference>
<dbReference type="GO" id="GO:0010961">
    <property type="term" value="P:intracellular magnesium ion homeostasis"/>
    <property type="evidence" value="ECO:0000315"/>
    <property type="project" value="ParkinsonsUK-UCL"/>
</dbReference>
<dbReference type="GO" id="GO:1903830">
    <property type="term" value="P:magnesium ion transmembrane transport"/>
    <property type="evidence" value="ECO:0000314"/>
    <property type="project" value="ParkinsonsUK-UCL"/>
</dbReference>
<dbReference type="GO" id="GO:0015693">
    <property type="term" value="P:magnesium ion transport"/>
    <property type="evidence" value="ECO:0000314"/>
    <property type="project" value="ParkinsonsUK-UCL"/>
</dbReference>
<dbReference type="GO" id="GO:0030001">
    <property type="term" value="P:metal ion transport"/>
    <property type="evidence" value="ECO:0000250"/>
    <property type="project" value="ParkinsonsUK-UCL"/>
</dbReference>
<dbReference type="FunFam" id="1.10.357.20:FF:000001">
    <property type="entry name" value="Solute carrier family 41 member 2"/>
    <property type="match status" value="1"/>
</dbReference>
<dbReference type="FunFam" id="1.10.357.20:FF:000002">
    <property type="entry name" value="Solute carrier family 41, member 2"/>
    <property type="match status" value="1"/>
</dbReference>
<dbReference type="Gene3D" id="1.10.357.20">
    <property type="entry name" value="SLC41 divalent cation transporters, integral membrane domain"/>
    <property type="match status" value="2"/>
</dbReference>
<dbReference type="InterPro" id="IPR006667">
    <property type="entry name" value="SLC41_membr_dom"/>
</dbReference>
<dbReference type="InterPro" id="IPR036739">
    <property type="entry name" value="SLC41_membr_dom_sf"/>
</dbReference>
<dbReference type="InterPro" id="IPR045349">
    <property type="entry name" value="SLC41A1-3"/>
</dbReference>
<dbReference type="PANTHER" id="PTHR16228">
    <property type="entry name" value="DIVALENT CATION TRANSPORTER SOLUTE CARRIER FAMILY 41"/>
    <property type="match status" value="1"/>
</dbReference>
<dbReference type="PANTHER" id="PTHR16228:SF23">
    <property type="entry name" value="SOLUTE CARRIER FAMILY 41 MEMBER 1"/>
    <property type="match status" value="1"/>
</dbReference>
<dbReference type="Pfam" id="PF01769">
    <property type="entry name" value="MgtE"/>
    <property type="match status" value="2"/>
</dbReference>
<dbReference type="SUPFAM" id="SSF161093">
    <property type="entry name" value="MgtE membrane domain-like"/>
    <property type="match status" value="2"/>
</dbReference>
<sequence length="513" mass="54901">MSSKPEPKDVHQLNGTGPSASPCSSDGPGREPLAGTSEFLGPDGAGVEVVIESRANAKGVREEDALLENGSQSNESDDVSTDRGPAPPSPLKETSFSIGLQVLFPFLLAGFGTVAAGMVLDIVQHWEVFQKVTEVFILVPALLGLKGNLEMTLASRLSTAANIGHMDTPKELWRMITGNMALIQVQATVVGFLASIAAVVFGWIPDGHFSIPHAFLLCASSVATAFIASLVLGMIMIGVIIGSRKIGINPDNVATPIAASLGDLITLALLSGISWGLYLELNHWRYIYPLVCAFFVALLPVWVVLARRSPATREVLYSGWEPVIIAMAISSVGGLILDKTVSDPNFAGMAVFTPVINGVGGNLVAVQASRISTFLHMNGMPGENSEQAPRRCPSPCTTFFSPDVNSRSARVLFLLVVPGHLVFLYTISCMQGGHTTLTLIFIIFYMTAALLQVLILLYIADWMVHWMWGRGLDPDNFSIPYLTALGDLLGTGLLALSFHVLWLIGDRDTDVGD</sequence>
<keyword id="KW-1003">Cell membrane</keyword>
<keyword id="KW-0225">Disease variant</keyword>
<keyword id="KW-0406">Ion transport</keyword>
<keyword id="KW-0460">Magnesium</keyword>
<keyword id="KW-0472">Membrane</keyword>
<keyword id="KW-0983">Nephronophthisis</keyword>
<keyword id="KW-0597">Phosphoprotein</keyword>
<keyword id="KW-1267">Proteomics identification</keyword>
<keyword id="KW-1185">Reference proteome</keyword>
<keyword id="KW-0677">Repeat</keyword>
<keyword id="KW-0812">Transmembrane</keyword>
<keyword id="KW-1133">Transmembrane helix</keyword>
<keyword id="KW-0813">Transport</keyword>
<reference key="1">
    <citation type="journal article" date="2003" name="Biochem. Biophys. Res. Commun.">
        <title>The human solute carrier SLC41A1 belongs to a novel eukaryotic subfamily with homology to prokaryotic MgtE Mg2+ transporters.</title>
        <authorList>
            <person name="Wabakken T."/>
            <person name="Rian E."/>
            <person name="Kveine M."/>
            <person name="Aasheim H.-C."/>
        </authorList>
    </citation>
    <scope>NUCLEOTIDE SEQUENCE [MRNA]</scope>
    <scope>TISSUE SPECIFICITY</scope>
</reference>
<reference key="2">
    <citation type="journal article" date="2007" name="BMC Genomics">
        <title>The full-ORF clone resource of the German cDNA consortium.</title>
        <authorList>
            <person name="Bechtel S."/>
            <person name="Rosenfelder H."/>
            <person name="Duda A."/>
            <person name="Schmidt C.P."/>
            <person name="Ernst U."/>
            <person name="Wellenreuther R."/>
            <person name="Mehrle A."/>
            <person name="Schuster C."/>
            <person name="Bahr A."/>
            <person name="Bloecker H."/>
            <person name="Heubner D."/>
            <person name="Hoerlein A."/>
            <person name="Michel G."/>
            <person name="Wedler H."/>
            <person name="Koehrer K."/>
            <person name="Ottenwaelder B."/>
            <person name="Poustka A."/>
            <person name="Wiemann S."/>
            <person name="Schupp I."/>
        </authorList>
    </citation>
    <scope>NUCLEOTIDE SEQUENCE [LARGE SCALE MRNA]</scope>
    <source>
        <tissue>Endometrial tumor</tissue>
        <tissue>Skeletal muscle</tissue>
        <tissue>Testis</tissue>
    </source>
</reference>
<reference key="3">
    <citation type="journal article" date="2008" name="J. Biol. Chem.">
        <title>SLC41A1 is a novel mammalian Mg2+ carrier.</title>
        <authorList>
            <person name="Kolisek M."/>
            <person name="Launay P."/>
            <person name="Beck A."/>
            <person name="Sponder G."/>
            <person name="Serafini N."/>
            <person name="Brenkus M."/>
            <person name="Froschauer E.M."/>
            <person name="Martens H."/>
            <person name="Fleig A."/>
            <person name="Schweigel M."/>
        </authorList>
    </citation>
    <scope>FUNCTION</scope>
    <scope>TRANSPORTER ACTIVITY</scope>
    <scope>ACTIVITY REGULATION</scope>
    <scope>SUBCELLULAR LOCATION</scope>
</reference>
<reference key="4">
    <citation type="journal article" date="2012" name="Am. J. Physiol.">
        <title>Human gene SLC41A1 encodes for the Na+/Mg2+ exchanger.</title>
        <authorList>
            <person name="Kolisek M."/>
            <person name="Nestler A."/>
            <person name="Vormann J."/>
            <person name="Schweigel-Roentgen M."/>
        </authorList>
    </citation>
    <scope>FUNCTION</scope>
    <scope>TRANSPORTER ACTIVITY</scope>
    <scope>ACTIVITY REGULATION</scope>
    <scope>PHOSPHORYLATION</scope>
</reference>
<reference key="5">
    <citation type="journal article" date="2016" name="Nature">
        <title>Daily magnesium fluxes regulate cellular timekeeping and energy balance.</title>
        <authorList>
            <person name="Feeney K.A."/>
            <person name="Hansen L.L."/>
            <person name="Putker M."/>
            <person name="Olivares-Yanez C."/>
            <person name="Day J."/>
            <person name="Eades L.J."/>
            <person name="Larrondo L.F."/>
            <person name="Hoyle N.P."/>
            <person name="O'Neill J.S."/>
            <person name="van Ooijen G."/>
        </authorList>
    </citation>
    <scope>FUNCTION</scope>
</reference>
<reference key="6">
    <citation type="journal article" date="2013" name="J. Am. Soc. Nephrol.">
        <title>Mutation of the Mg2+ transporter SLC41A1 results in a nephronophthisis-like phenotype.</title>
        <authorList>
            <person name="Hurd T.W."/>
            <person name="Otto E.A."/>
            <person name="Mishima E."/>
            <person name="Gee H.Y."/>
            <person name="Inoue H."/>
            <person name="Inazu M."/>
            <person name="Yamada H."/>
            <person name="Halbritter J."/>
            <person name="Seki G."/>
            <person name="Konishi M."/>
            <person name="Zhou W."/>
            <person name="Yamane T."/>
            <person name="Murakami S."/>
            <person name="Caridi G."/>
            <person name="Ghiggeri G."/>
            <person name="Abe T."/>
            <person name="Hildebrandt F."/>
        </authorList>
    </citation>
    <scope>VARIANT NPHPL2 VAL-233</scope>
    <scope>INVOLVEMENT IN NPHPL2</scope>
    <scope>CHARACTERIZATION OF VARIANT NPHPL2 VAL-233</scope>
    <scope>SUBCELLULAR LOCATION</scope>
    <scope>FUNCTION</scope>
    <scope>TRANSPORTER ACTIVITY</scope>
    <scope>TISSUE SPECIFICITY</scope>
</reference>
<reference key="7">
    <citation type="journal article" date="2013" name="PLoS ONE">
        <title>Substitution p.A350V in Na+/Mg2+ exchanger SLC41A1, potentially associated with Parkinson's disease, is a gain-of-function mutation.</title>
        <authorList>
            <person name="Kolisek M."/>
            <person name="Sponder G."/>
            <person name="Mastrototaro L."/>
            <person name="Smorodchenko A."/>
            <person name="Launay P."/>
            <person name="Vormann J."/>
            <person name="Schweigel-Roentgen M."/>
        </authorList>
    </citation>
    <scope>VARIANT VAL-350</scope>
    <scope>CHARACTERIZATION OF VARIANT VAL-350</scope>
    <scope>FUNCTION</scope>
    <scope>TRANSPORTER ACTIVITY</scope>
    <scope>SUBCELLULAR LOCATION</scope>
    <scope>ACTIVITY REGULATION</scope>
</reference>
<comment type="function">
    <text evidence="1 5 6 7 8 9">Na(+)/Mg(2+) ion exchanger that acts as a predominant Mg(2+) efflux system at the plasma membrane (PubMed:18367447, PubMed:22031603, PubMed:23661805, PubMed:23976986). Transporter activity is driven by the inwardly directed electrochemical gradient for Na(+) ions, thus directly depends on the extracellular Na(+) ion concentration set by Na(+)/K(+) pump (PubMed:22031603, PubMed:23661805). Generates circadian cellular Mg(2+) fluxes that feed back to regulate clock-controlled gene expression and metabolism and facilitate higher energetic demands during the day (PubMed:27074515). Has a role in regulating the activity of ATP-dependent enzymes, including those operating in Krebs cycle and the electron transport chain (By similarity).</text>
</comment>
<comment type="catalytic activity">
    <reaction evidence="5 6 7 8">
        <text>Mg(2+)(in) + 2 Na(+)(out) = Mg(2+)(out) + 2 Na(+)(in)</text>
        <dbReference type="Rhea" id="RHEA:66616"/>
        <dbReference type="ChEBI" id="CHEBI:18420"/>
        <dbReference type="ChEBI" id="CHEBI:29101"/>
    </reaction>
    <physiologicalReaction direction="left-to-right" evidence="12">
        <dbReference type="Rhea" id="RHEA:66617"/>
    </physiologicalReaction>
</comment>
<comment type="activity regulation">
    <text evidence="5 6 8">The exchange activity is regulated by phosphorylation in a cyclic AMP signaling-dependent way (PubMed:22031603, PubMed:23661805). Temperature-sensitive, reduction or elevation of the temperature significantly decreases or increases its activity respectively (PubMed:18367447).</text>
</comment>
<comment type="interaction">
    <interactant intactId="EBI-12266234">
        <id>Q8IVJ1</id>
    </interactant>
    <interactant intactId="EBI-19125216">
        <id>Q86WK6</id>
        <label>AMIGO1</label>
    </interactant>
    <organismsDiffer>false</organismsDiffer>
    <experiments>3</experiments>
</comment>
<comment type="interaction">
    <interactant intactId="EBI-12266234">
        <id>Q8IVJ1</id>
    </interactant>
    <interactant intactId="EBI-13059134">
        <id>Q13520</id>
        <label>AQP6</label>
    </interactant>
    <organismsDiffer>false</organismsDiffer>
    <experiments>3</experiments>
</comment>
<comment type="interaction">
    <interactant intactId="EBI-12266234">
        <id>Q8IVJ1</id>
    </interactant>
    <interactant intactId="EBI-11675746">
        <id>P30518</id>
        <label>AVPR2</label>
    </interactant>
    <organismsDiffer>false</organismsDiffer>
    <experiments>3</experiments>
</comment>
<comment type="interaction">
    <interactant intactId="EBI-12266234">
        <id>Q8IVJ1</id>
    </interactant>
    <interactant intactId="EBI-7797864">
        <id>P11912</id>
        <label>CD79A</label>
    </interactant>
    <organismsDiffer>false</organismsDiffer>
    <experiments>3</experiments>
</comment>
<comment type="interaction">
    <interactant intactId="EBI-12266234">
        <id>Q8IVJ1</id>
    </interactant>
    <interactant intactId="EBI-1043514">
        <id>O75503</id>
        <label>CLN5</label>
    </interactant>
    <organismsDiffer>false</organismsDiffer>
    <experiments>3</experiments>
</comment>
<comment type="interaction">
    <interactant intactId="EBI-12266234">
        <id>Q8IVJ1</id>
    </interactant>
    <interactant intactId="EBI-10285373">
        <id>A1L3X0</id>
        <label>ELOVL7</label>
    </interactant>
    <organismsDiffer>false</organismsDiffer>
    <experiments>3</experiments>
</comment>
<comment type="interaction">
    <interactant intactId="EBI-12266234">
        <id>Q8IVJ1</id>
    </interactant>
    <interactant intactId="EBI-781551">
        <id>Q9Y282</id>
        <label>ERGIC3</label>
    </interactant>
    <organismsDiffer>false</organismsDiffer>
    <experiments>3</experiments>
</comment>
<comment type="interaction">
    <interactant intactId="EBI-12266234">
        <id>Q8IVJ1</id>
    </interactant>
    <interactant intactId="EBI-2833872">
        <id>O15552</id>
        <label>FFAR2</label>
    </interactant>
    <organismsDiffer>false</organismsDiffer>
    <experiments>3</experiments>
</comment>
<comment type="interaction">
    <interactant intactId="EBI-12266234">
        <id>Q8IVJ1</id>
    </interactant>
    <interactant intactId="EBI-17762181">
        <id>O14843</id>
        <label>FFAR3</label>
    </interactant>
    <organismsDiffer>false</organismsDiffer>
    <experiments>3</experiments>
</comment>
<comment type="interaction">
    <interactant intactId="EBI-12266234">
        <id>Q8IVJ1</id>
    </interactant>
    <interactant intactId="EBI-750433">
        <id>P36382</id>
        <label>GJA5</label>
    </interactant>
    <organismsDiffer>false</organismsDiffer>
    <experiments>3</experiments>
</comment>
<comment type="interaction">
    <interactant intactId="EBI-12266234">
        <id>Q8IVJ1</id>
    </interactant>
    <interactant intactId="EBI-3909454">
        <id>O95377</id>
        <label>GJB5</label>
    </interactant>
    <organismsDiffer>false</organismsDiffer>
    <experiments>3</experiments>
</comment>
<comment type="interaction">
    <interactant intactId="EBI-12266234">
        <id>Q8IVJ1</id>
    </interactant>
    <interactant intactId="EBI-17935713">
        <id>Q96P66</id>
        <label>GPR101</label>
    </interactant>
    <organismsDiffer>false</organismsDiffer>
    <experiments>3</experiments>
</comment>
<comment type="interaction">
    <interactant intactId="EBI-12266234">
        <id>Q8IVJ1</id>
    </interactant>
    <interactant intactId="EBI-13345167">
        <id>Q8TDT2</id>
        <label>GPR152</label>
    </interactant>
    <organismsDiffer>false</organismsDiffer>
    <experiments>3</experiments>
</comment>
<comment type="interaction">
    <interactant intactId="EBI-12266234">
        <id>Q8IVJ1</id>
    </interactant>
    <interactant intactId="EBI-18076404">
        <id>O15529</id>
        <label>GPR42</label>
    </interactant>
    <organismsDiffer>false</organismsDiffer>
    <experiments>3</experiments>
</comment>
<comment type="interaction">
    <interactant intactId="EBI-12266234">
        <id>Q8IVJ1</id>
    </interactant>
    <interactant intactId="EBI-12808020">
        <id>Q9BZJ8</id>
        <label>GPR61</label>
    </interactant>
    <organismsDiffer>false</organismsDiffer>
    <experiments>3</experiments>
</comment>
<comment type="interaction">
    <interactant intactId="EBI-12266234">
        <id>Q8IVJ1</id>
    </interactant>
    <interactant intactId="EBI-749265">
        <id>Q8N6L0</id>
        <label>KASH5</label>
    </interactant>
    <organismsDiffer>false</organismsDiffer>
    <experiments>3</experiments>
</comment>
<comment type="interaction">
    <interactant intactId="EBI-12266234">
        <id>Q8IVJ1</id>
    </interactant>
    <interactant intactId="EBI-2820517">
        <id>Q8TAF8</id>
        <label>LHFPL5</label>
    </interactant>
    <organismsDiffer>false</organismsDiffer>
    <experiments>3</experiments>
</comment>
<comment type="interaction">
    <interactant intactId="EBI-12266234">
        <id>Q8IVJ1</id>
    </interactant>
    <interactant intactId="EBI-12807478">
        <id>P35372-10</id>
        <label>OPRM1</label>
    </interactant>
    <organismsDiffer>false</organismsDiffer>
    <experiments>3</experiments>
</comment>
<comment type="interaction">
    <interactant intactId="EBI-12266234">
        <id>Q8IVJ1</id>
    </interactant>
    <interactant intactId="EBI-712703">
        <id>O15127</id>
        <label>SCAMP2</label>
    </interactant>
    <organismsDiffer>false</organismsDiffer>
    <experiments>3</experiments>
</comment>
<comment type="interaction">
    <interactant intactId="EBI-12266234">
        <id>Q8IVJ1</id>
    </interactant>
    <interactant intactId="EBI-3923031">
        <id>Q14973</id>
        <label>SLC10A1</label>
    </interactant>
    <organismsDiffer>false</organismsDiffer>
    <experiments>3</experiments>
</comment>
<comment type="interaction">
    <interactant intactId="EBI-12266234">
        <id>Q8IVJ1</id>
    </interactant>
    <interactant intactId="EBI-18159983">
        <id>Q3KNW5</id>
        <label>SLC10A6</label>
    </interactant>
    <organismsDiffer>false</organismsDiffer>
    <experiments>3</experiments>
</comment>
<comment type="interaction">
    <interactant intactId="EBI-12266234">
        <id>Q8IVJ1</id>
    </interactant>
    <interactant intactId="EBI-12808018">
        <id>Q9UKG4</id>
        <label>SLC13A4</label>
    </interactant>
    <organismsDiffer>false</organismsDiffer>
    <experiments>3</experiments>
</comment>
<comment type="interaction">
    <interactant intactId="EBI-12266234">
        <id>Q8IVJ1</id>
    </interactant>
    <interactant intactId="EBI-17280858">
        <id>Q8WWF3</id>
        <label>SSMEM1</label>
    </interactant>
    <organismsDiffer>false</organismsDiffer>
    <experiments>3</experiments>
</comment>
<comment type="interaction">
    <interactant intactId="EBI-12266234">
        <id>Q8IVJ1</id>
    </interactant>
    <interactant intactId="EBI-726331">
        <id>Q9H7V2</id>
        <label>SYNDIG1</label>
    </interactant>
    <organismsDiffer>false</organismsDiffer>
    <experiments>3</experiments>
</comment>
<comment type="interaction">
    <interactant intactId="EBI-12266234">
        <id>Q8IVJ1</id>
    </interactant>
    <interactant intactId="EBI-18196631">
        <id>Q5VXT5-2</id>
        <label>SYPL2</label>
    </interactant>
    <organismsDiffer>false</organismsDiffer>
    <experiments>3</experiments>
</comment>
<comment type="interaction">
    <interactant intactId="EBI-12266234">
        <id>Q8IVJ1</id>
    </interactant>
    <interactant intactId="EBI-12908048">
        <id>Q96RI9</id>
        <label>TAAR9</label>
    </interactant>
    <organismsDiffer>false</organismsDiffer>
    <experiments>3</experiments>
</comment>
<comment type="interaction">
    <interactant intactId="EBI-12266234">
        <id>Q8IVJ1</id>
    </interactant>
    <interactant intactId="EBI-18271435">
        <id>Q0VAB0</id>
        <label>TBXA2R</label>
    </interactant>
    <organismsDiffer>false</organismsDiffer>
    <experiments>3</experiments>
</comment>
<comment type="interaction">
    <interactant intactId="EBI-12266234">
        <id>Q8IVJ1</id>
    </interactant>
    <interactant intactId="EBI-12947623">
        <id>Q96MV1</id>
        <label>TLCD4</label>
    </interactant>
    <organismsDiffer>false</organismsDiffer>
    <experiments>3</experiments>
</comment>
<comment type="interaction">
    <interactant intactId="EBI-12266234">
        <id>Q8IVJ1</id>
    </interactant>
    <interactant intactId="EBI-10982110">
        <id>Q96Q45-2</id>
        <label>TMEM237</label>
    </interactant>
    <organismsDiffer>false</organismsDiffer>
    <experiments>5</experiments>
</comment>
<comment type="interaction">
    <interactant intactId="EBI-12266234">
        <id>Q8IVJ1</id>
    </interactant>
    <interactant intactId="EBI-10314986">
        <id>Q9NWD8</id>
        <label>TMEM248</label>
    </interactant>
    <organismsDiffer>false</organismsDiffer>
    <experiments>3</experiments>
</comment>
<comment type="interaction">
    <interactant intactId="EBI-12266234">
        <id>Q8IVJ1</id>
    </interactant>
    <interactant intactId="EBI-18055230">
        <id>P34981</id>
        <label>TRHR</label>
    </interactant>
    <organismsDiffer>false</organismsDiffer>
    <experiments>3</experiments>
</comment>
<comment type="subcellular location">
    <subcellularLocation>
        <location evidence="5 8">Cell membrane</location>
        <topology evidence="2">Multi-pass membrane protein</topology>
    </subcellularLocation>
    <subcellularLocation>
        <location evidence="7">Basolateral cell membrane</location>
        <topology evidence="2">Multi-pass membrane protein</topology>
    </subcellularLocation>
</comment>
<comment type="tissue specificity">
    <text evidence="4 7">Highest expression levels in heart and testis, slightly less in skeletal muscles, prostate, adrenal gland and thyroid, and weakest in the hematopoietic tissues bones marrow, lymph node, thymus and spleen. In the kidney, it is expressed in the distal convoluted tubules, macula densa, and thick ascending limb tubular segments of the nephrons (PubMed:23661805).</text>
</comment>
<comment type="PTM">
    <text evidence="6">Phosphorylated.</text>
</comment>
<comment type="disease" evidence="7">
    <disease id="DI-06186">
        <name>Nephronophthisis-like nephropathy 2</name>
        <acronym>NPHPL2</acronym>
        <description>A disorder with features of nephronophthisis, a cystic kidney disease leading to end-stage renal failure. Nephronophthisis is histologically characterized by modifications of the tubules with thickening of the basement membrane, interstitial fibrosis and, in the advanced stages, medullary cysts. Typical clinical manifestation are chronic renal failure, anemia, polyuria, polydipsia, isosthenuria, and growth retardation. Associations with extrarenal symptoms are frequent. NPHPL2 is an autosomal recessive form characterized by onset of progressive renal insufficiency in the first decades of life.</description>
        <dbReference type="MIM" id="619468"/>
    </disease>
    <text>The disease is caused by variants affecting the gene represented in this entry.</text>
</comment>
<comment type="similarity">
    <text evidence="11">Belongs to the SLC41A transporter family.</text>
</comment>
<gene>
    <name evidence="10 13" type="primary">SLC41A1</name>
</gene>